<reference evidence="6" key="1">
    <citation type="journal article" date="2013" name="Toxicon">
        <title>Novel potassium channel blocker venom peptides from Mesobuthus gibbosus (Scorpiones: Buthidae).</title>
        <authorList>
            <person name="Diego-Garcia E."/>
            <person name="Peigneur S."/>
            <person name="Debaveye S."/>
            <person name="Gheldof E."/>
            <person name="Tytgat J."/>
            <person name="Caliskan F."/>
        </authorList>
    </citation>
    <scope>PROTEIN SEQUENCE</scope>
    <scope>FUNCTION</scope>
    <source>
        <tissue evidence="4">Venom</tissue>
    </source>
</reference>
<feature type="peptide" id="PRO_0000421236" description="Potassium channel toxin alpha-KTx 3.15" evidence="4">
    <location>
        <begin position="1"/>
        <end position="29"/>
    </location>
</feature>
<feature type="disulfide bond" evidence="2">
    <location>
        <begin position="8"/>
        <end position="27"/>
    </location>
</feature>
<feature type="non-terminal residue" evidence="5">
    <location>
        <position position="29"/>
    </location>
</feature>
<sequence>GSPLTYPCHSAQCEQPCKDANMRFGXCMN</sequence>
<comment type="function">
    <text evidence="4">May play a role in blocking voltage-gated potassium channels Kv1.1/KCNA1, Kv1.3/KCNA3 and Kv1.6/KCNA6.</text>
</comment>
<comment type="subcellular location">
    <subcellularLocation>
        <location evidence="4">Secreted</location>
    </subcellularLocation>
</comment>
<comment type="tissue specificity">
    <text evidence="7">Expressed by the venom gland.</text>
</comment>
<comment type="domain">
    <text evidence="6">Has the structural arrangement of an alpha-helix connected to antiparallel beta-sheets by disulfide bonds (CS-alpha/beta).</text>
</comment>
<comment type="miscellaneous">
    <text evidence="7">Negative results: has no effect on rat Kv1.2/KCNA2, Kv1.4/KCNA4 and Kv1.5/KCNA5 channels.</text>
</comment>
<comment type="similarity">
    <text evidence="3">Belongs to the short scorpion toxin superfamily. Potassium channel inhibitor family. Alpha-KTx 03 subfamily.</text>
</comment>
<name>KAX3F_MESGB</name>
<evidence type="ECO:0000250" key="1">
    <source>
        <dbReference type="UniProtKB" id="P0C909"/>
    </source>
</evidence>
<evidence type="ECO:0000250" key="2">
    <source>
        <dbReference type="UniProtKB" id="P55896"/>
    </source>
</evidence>
<evidence type="ECO:0000255" key="3"/>
<evidence type="ECO:0000269" key="4">
    <source>
    </source>
</evidence>
<evidence type="ECO:0000303" key="5">
    <source>
    </source>
</evidence>
<evidence type="ECO:0000305" key="6"/>
<evidence type="ECO:0000305" key="7">
    <source>
    </source>
</evidence>
<organism>
    <name type="scientific">Mesobuthus gibbosus</name>
    <name type="common">Mediterranean checkered scorpion</name>
    <name type="synonym">Buthus gibbosus</name>
    <dbReference type="NCBI Taxonomy" id="123226"/>
    <lineage>
        <taxon>Eukaryota</taxon>
        <taxon>Metazoa</taxon>
        <taxon>Ecdysozoa</taxon>
        <taxon>Arthropoda</taxon>
        <taxon>Chelicerata</taxon>
        <taxon>Arachnida</taxon>
        <taxon>Scorpiones</taxon>
        <taxon>Buthida</taxon>
        <taxon>Buthoidea</taxon>
        <taxon>Buthidae</taxon>
        <taxon>Mesobuthus</taxon>
    </lineage>
</organism>
<accession>B3EWY0</accession>
<dbReference type="GO" id="GO:0005576">
    <property type="term" value="C:extracellular region"/>
    <property type="evidence" value="ECO:0007669"/>
    <property type="project" value="UniProtKB-SubCell"/>
</dbReference>
<dbReference type="GO" id="GO:0015459">
    <property type="term" value="F:potassium channel regulator activity"/>
    <property type="evidence" value="ECO:0007669"/>
    <property type="project" value="UniProtKB-KW"/>
</dbReference>
<dbReference type="GO" id="GO:0090729">
    <property type="term" value="F:toxin activity"/>
    <property type="evidence" value="ECO:0007669"/>
    <property type="project" value="UniProtKB-KW"/>
</dbReference>
<dbReference type="Gene3D" id="3.30.30.10">
    <property type="entry name" value="Knottin, scorpion toxin-like"/>
    <property type="match status" value="1"/>
</dbReference>
<dbReference type="InterPro" id="IPR036574">
    <property type="entry name" value="Scorpion_toxin-like_sf"/>
</dbReference>
<dbReference type="SUPFAM" id="SSF57095">
    <property type="entry name" value="Scorpion toxin-like"/>
    <property type="match status" value="1"/>
</dbReference>
<protein>
    <recommendedName>
        <fullName evidence="1">Potassium channel toxin alpha-KTx 3.15</fullName>
    </recommendedName>
    <alternativeName>
        <fullName evidence="5">MegKTx1</fullName>
    </alternativeName>
</protein>
<proteinExistence type="evidence at protein level"/>
<keyword id="KW-0903">Direct protein sequencing</keyword>
<keyword id="KW-1015">Disulfide bond</keyword>
<keyword id="KW-0872">Ion channel impairing toxin</keyword>
<keyword id="KW-0632">Potassium channel impairing toxin</keyword>
<keyword id="KW-0964">Secreted</keyword>
<keyword id="KW-0800">Toxin</keyword>
<keyword id="KW-1220">Voltage-gated potassium channel impairing toxin</keyword>